<comment type="catalytic activity">
    <reaction evidence="1">
        <text>(4aS,6R)-4a-hydroxy-L-erythro-5,6,7,8-tetrahydrobiopterin = (6R)-L-erythro-6,7-dihydrobiopterin + H2O</text>
        <dbReference type="Rhea" id="RHEA:11920"/>
        <dbReference type="ChEBI" id="CHEBI:15377"/>
        <dbReference type="ChEBI" id="CHEBI:15642"/>
        <dbReference type="ChEBI" id="CHEBI:43120"/>
        <dbReference type="EC" id="4.2.1.96"/>
    </reaction>
</comment>
<comment type="similarity">
    <text evidence="1">Belongs to the pterin-4-alpha-carbinolamine dehydratase family.</text>
</comment>
<proteinExistence type="inferred from homology"/>
<organism>
    <name type="scientific">Burkholderia orbicola (strain MC0-3)</name>
    <dbReference type="NCBI Taxonomy" id="406425"/>
    <lineage>
        <taxon>Bacteria</taxon>
        <taxon>Pseudomonadati</taxon>
        <taxon>Pseudomonadota</taxon>
        <taxon>Betaproteobacteria</taxon>
        <taxon>Burkholderiales</taxon>
        <taxon>Burkholderiaceae</taxon>
        <taxon>Burkholderia</taxon>
        <taxon>Burkholderia cepacia complex</taxon>
        <taxon>Burkholderia orbicola</taxon>
    </lineage>
</organism>
<dbReference type="EC" id="4.2.1.96" evidence="1"/>
<dbReference type="EMBL" id="CP000958">
    <property type="protein sequence ID" value="ACA89275.1"/>
    <property type="molecule type" value="Genomic_DNA"/>
</dbReference>
<dbReference type="SMR" id="B1K1I7"/>
<dbReference type="KEGG" id="bcm:Bcenmc03_0095"/>
<dbReference type="HOGENOM" id="CLU_081974_3_2_4"/>
<dbReference type="Proteomes" id="UP000002169">
    <property type="component" value="Chromosome 1"/>
</dbReference>
<dbReference type="GO" id="GO:0008124">
    <property type="term" value="F:4-alpha-hydroxytetrahydrobiopterin dehydratase activity"/>
    <property type="evidence" value="ECO:0007669"/>
    <property type="project" value="UniProtKB-UniRule"/>
</dbReference>
<dbReference type="GO" id="GO:0006729">
    <property type="term" value="P:tetrahydrobiopterin biosynthetic process"/>
    <property type="evidence" value="ECO:0007669"/>
    <property type="project" value="InterPro"/>
</dbReference>
<dbReference type="CDD" id="cd00914">
    <property type="entry name" value="PCD_DCoH_subfamily_b"/>
    <property type="match status" value="1"/>
</dbReference>
<dbReference type="Gene3D" id="3.30.1360.20">
    <property type="entry name" value="Transcriptional coactivator/pterin dehydratase"/>
    <property type="match status" value="1"/>
</dbReference>
<dbReference type="HAMAP" id="MF_00434">
    <property type="entry name" value="Pterin_4_alpha"/>
    <property type="match status" value="1"/>
</dbReference>
<dbReference type="InterPro" id="IPR036428">
    <property type="entry name" value="PCD_sf"/>
</dbReference>
<dbReference type="InterPro" id="IPR001533">
    <property type="entry name" value="Pterin_deHydtase"/>
</dbReference>
<dbReference type="NCBIfam" id="NF002017">
    <property type="entry name" value="PRK00823.1-2"/>
    <property type="match status" value="1"/>
</dbReference>
<dbReference type="NCBIfam" id="NF002018">
    <property type="entry name" value="PRK00823.1-3"/>
    <property type="match status" value="1"/>
</dbReference>
<dbReference type="NCBIfam" id="NF002020">
    <property type="entry name" value="PRK00823.1-5"/>
    <property type="match status" value="1"/>
</dbReference>
<dbReference type="PANTHER" id="PTHR12599">
    <property type="entry name" value="PTERIN-4-ALPHA-CARBINOLAMINE DEHYDRATASE"/>
    <property type="match status" value="1"/>
</dbReference>
<dbReference type="PANTHER" id="PTHR12599:SF0">
    <property type="entry name" value="PTERIN-4-ALPHA-CARBINOLAMINE DEHYDRATASE"/>
    <property type="match status" value="1"/>
</dbReference>
<dbReference type="Pfam" id="PF01329">
    <property type="entry name" value="Pterin_4a"/>
    <property type="match status" value="1"/>
</dbReference>
<dbReference type="SUPFAM" id="SSF55248">
    <property type="entry name" value="PCD-like"/>
    <property type="match status" value="1"/>
</dbReference>
<evidence type="ECO:0000255" key="1">
    <source>
        <dbReference type="HAMAP-Rule" id="MF_00434"/>
    </source>
</evidence>
<protein>
    <recommendedName>
        <fullName evidence="1">Putative pterin-4-alpha-carbinolamine dehydratase</fullName>
        <shortName evidence="1">PHS</shortName>
        <ecNumber evidence="1">4.2.1.96</ecNumber>
    </recommendedName>
    <alternativeName>
        <fullName evidence="1">4-alpha-hydroxy-tetrahydropterin dehydratase</fullName>
    </alternativeName>
    <alternativeName>
        <fullName evidence="1">Pterin carbinolamine dehydratase</fullName>
        <shortName evidence="1">PCD</shortName>
    </alternativeName>
</protein>
<feature type="chain" id="PRO_1000192910" description="Putative pterin-4-alpha-carbinolamine dehydratase">
    <location>
        <begin position="1"/>
        <end position="102"/>
    </location>
</feature>
<name>PHS_BURO0</name>
<reference key="1">
    <citation type="submission" date="2008-02" db="EMBL/GenBank/DDBJ databases">
        <title>Complete sequence of chromosome 1 of Burkholderia cenocepacia MC0-3.</title>
        <authorList>
            <person name="Copeland A."/>
            <person name="Lucas S."/>
            <person name="Lapidus A."/>
            <person name="Barry K."/>
            <person name="Bruce D."/>
            <person name="Goodwin L."/>
            <person name="Glavina del Rio T."/>
            <person name="Dalin E."/>
            <person name="Tice H."/>
            <person name="Pitluck S."/>
            <person name="Chain P."/>
            <person name="Malfatti S."/>
            <person name="Shin M."/>
            <person name="Vergez L."/>
            <person name="Schmutz J."/>
            <person name="Larimer F."/>
            <person name="Land M."/>
            <person name="Hauser L."/>
            <person name="Kyrpides N."/>
            <person name="Mikhailova N."/>
            <person name="Tiedje J."/>
            <person name="Richardson P."/>
        </authorList>
    </citation>
    <scope>NUCLEOTIDE SEQUENCE [LARGE SCALE GENOMIC DNA]</scope>
    <source>
        <strain>MC0-3</strain>
    </source>
</reference>
<gene>
    <name type="ordered locus">Bcenmc03_0095</name>
</gene>
<sequence>MIHKLTSEERKTRLEDLPHWTAVAGRDAIQRRLRFADFNEAFGFMTRVAIKAQEMNHHPEWFNVYNRVDITLSTHDADGLTERDIELARFIDGAAAHAQPGA</sequence>
<accession>B1K1I7</accession>
<keyword id="KW-0456">Lyase</keyword>